<gene>
    <name type="primary">PDIA3</name>
    <name type="synonym">GRP58</name>
</gene>
<feature type="signal peptide" evidence="1">
    <location>
        <begin position="1"/>
        <end position="24"/>
    </location>
</feature>
<feature type="chain" id="PRO_0000034224" description="Protein disulfide-isomerase A3">
    <location>
        <begin position="25"/>
        <end position="505"/>
    </location>
</feature>
<feature type="domain" description="Thioredoxin 1" evidence="5">
    <location>
        <begin position="25"/>
        <end position="133"/>
    </location>
</feature>
<feature type="domain" description="Thioredoxin 2" evidence="5">
    <location>
        <begin position="343"/>
        <end position="485"/>
    </location>
</feature>
<feature type="region of interest" description="Disordered" evidence="6">
    <location>
        <begin position="484"/>
        <end position="505"/>
    </location>
</feature>
<feature type="short sequence motif" description="Prevents secretion from ER" evidence="2">
    <location>
        <begin position="502"/>
        <end position="505"/>
    </location>
</feature>
<feature type="compositionally biased region" description="Basic and acidic residues" evidence="6">
    <location>
        <begin position="491"/>
        <end position="505"/>
    </location>
</feature>
<feature type="active site" description="Nucleophile" evidence="4">
    <location>
        <position position="57"/>
    </location>
</feature>
<feature type="active site" description="Nucleophile" evidence="4">
    <location>
        <position position="60"/>
    </location>
</feature>
<feature type="active site" description="Nucleophile" evidence="4">
    <location>
        <position position="406"/>
    </location>
</feature>
<feature type="active site" description="Nucleophile" evidence="4">
    <location>
        <position position="409"/>
    </location>
</feature>
<feature type="site" description="Contributes to redox potential value" evidence="1">
    <location>
        <position position="58"/>
    </location>
</feature>
<feature type="site" description="Contributes to redox potential value" evidence="1">
    <location>
        <position position="59"/>
    </location>
</feature>
<feature type="site" description="Lowers pKa of C-terminal Cys of first active site" evidence="1">
    <location>
        <position position="119"/>
    </location>
</feature>
<feature type="site" description="Contributes to redox potential value" evidence="1">
    <location>
        <position position="407"/>
    </location>
</feature>
<feature type="site" description="Contributes to redox potential value" evidence="1">
    <location>
        <position position="408"/>
    </location>
</feature>
<feature type="site" description="Lowers pKa of C-terminal Cys of second active site" evidence="1">
    <location>
        <position position="471"/>
    </location>
</feature>
<feature type="modified residue" description="N6-methyllysine" evidence="4">
    <location>
        <position position="61"/>
    </location>
</feature>
<feature type="modified residue" description="N6-succinyllysine" evidence="3">
    <location>
        <position position="129"/>
    </location>
</feature>
<feature type="modified residue" description="N6-acetyllysine" evidence="3">
    <location>
        <position position="152"/>
    </location>
</feature>
<feature type="modified residue" description="N6-succinyllysine" evidence="3">
    <location>
        <position position="218"/>
    </location>
</feature>
<feature type="modified residue" description="N6-acetyllysine" evidence="3">
    <location>
        <position position="252"/>
    </location>
</feature>
<feature type="modified residue" description="Phosphothreonine" evidence="4">
    <location>
        <position position="319"/>
    </location>
</feature>
<feature type="modified residue" description="N6-acetyllysine" evidence="3">
    <location>
        <position position="362"/>
    </location>
</feature>
<feature type="modified residue" description="N6-acetyllysine" evidence="3">
    <location>
        <position position="494"/>
    </location>
</feature>
<feature type="disulfide bond" description="Redox-active; reversible" evidence="4 5">
    <location>
        <begin position="57"/>
        <end position="60"/>
    </location>
</feature>
<feature type="disulfide bond" description="Interchain (with TAPBP); in linked form; reversible" evidence="4">
    <location>
        <position position="57"/>
    </location>
</feature>
<feature type="disulfide bond" evidence="4">
    <location>
        <begin position="85"/>
        <end position="92"/>
    </location>
</feature>
<feature type="disulfide bond" description="Redox-active" evidence="4 5">
    <location>
        <begin position="406"/>
        <end position="409"/>
    </location>
</feature>
<keyword id="KW-0007">Acetylation</keyword>
<keyword id="KW-1064">Adaptive immunity</keyword>
<keyword id="KW-1015">Disulfide bond</keyword>
<keyword id="KW-0256">Endoplasmic reticulum</keyword>
<keyword id="KW-0391">Immunity</keyword>
<keyword id="KW-0413">Isomerase</keyword>
<keyword id="KW-0488">Methylation</keyword>
<keyword id="KW-0597">Phosphoprotein</keyword>
<keyword id="KW-0676">Redox-active center</keyword>
<keyword id="KW-1185">Reference proteome</keyword>
<keyword id="KW-0677">Repeat</keyword>
<keyword id="KW-0732">Signal</keyword>
<proteinExistence type="evidence at transcript level"/>
<reference key="1">
    <citation type="journal article" date="1995" name="Eur. J. Biochem.">
        <title>Molecular cloning of the human glucose-regulated protein ERp57/GRP58, a thiol-dependent reductase. Identification of its secretory form and inducible expression by the oncogenic transformation.</title>
        <authorList>
            <person name="Hirano N."/>
            <person name="Shibasaki F."/>
            <person name="Sakai R."/>
            <person name="Tanaka T."/>
            <person name="Nishida J."/>
            <person name="Yazaki Y."/>
            <person name="Takenawa T."/>
            <person name="Hirai H."/>
        </authorList>
    </citation>
    <scope>NUCLEOTIDE SEQUENCE [MRNA]</scope>
</reference>
<organism>
    <name type="scientific">Bos taurus</name>
    <name type="common">Bovine</name>
    <dbReference type="NCBI Taxonomy" id="9913"/>
    <lineage>
        <taxon>Eukaryota</taxon>
        <taxon>Metazoa</taxon>
        <taxon>Chordata</taxon>
        <taxon>Craniata</taxon>
        <taxon>Vertebrata</taxon>
        <taxon>Euteleostomi</taxon>
        <taxon>Mammalia</taxon>
        <taxon>Eutheria</taxon>
        <taxon>Laurasiatheria</taxon>
        <taxon>Artiodactyla</taxon>
        <taxon>Ruminantia</taxon>
        <taxon>Pecora</taxon>
        <taxon>Bovidae</taxon>
        <taxon>Bovinae</taxon>
        <taxon>Bos</taxon>
    </lineage>
</organism>
<evidence type="ECO:0000250" key="1"/>
<evidence type="ECO:0000250" key="2">
    <source>
        <dbReference type="UniProtKB" id="P11598"/>
    </source>
</evidence>
<evidence type="ECO:0000250" key="3">
    <source>
        <dbReference type="UniProtKB" id="P27773"/>
    </source>
</evidence>
<evidence type="ECO:0000250" key="4">
    <source>
        <dbReference type="UniProtKB" id="P30101"/>
    </source>
</evidence>
<evidence type="ECO:0000255" key="5">
    <source>
        <dbReference type="PROSITE-ProRule" id="PRU00691"/>
    </source>
</evidence>
<evidence type="ECO:0000256" key="6">
    <source>
        <dbReference type="SAM" id="MobiDB-lite"/>
    </source>
</evidence>
<evidence type="ECO:0000305" key="7"/>
<name>PDIA3_BOVIN</name>
<accession>P38657</accession>
<protein>
    <recommendedName>
        <fullName>Protein disulfide-isomerase A3</fullName>
        <ecNumber evidence="4">5.3.4.1</ecNumber>
    </recommendedName>
    <alternativeName>
        <fullName>58 kDa glucose-regulated protein</fullName>
    </alternativeName>
    <alternativeName>
        <fullName>58 kDa microsomal protein</fullName>
        <shortName>p58</shortName>
    </alternativeName>
    <alternativeName>
        <fullName>Disulfide isomerase ER-60</fullName>
    </alternativeName>
    <alternativeName>
        <fullName>Endoplasmic reticulum resident protein 57</fullName>
        <shortName>ER protein 57</shortName>
        <shortName>ERp57</shortName>
    </alternativeName>
    <alternativeName>
        <fullName>Endoplasmic reticulum resident protein 60</fullName>
        <shortName>ER protein 60</shortName>
        <shortName>ERp60</shortName>
    </alternativeName>
</protein>
<comment type="function">
    <text evidence="4">Protein disulfide isomerase that catalyzes the formation, isomerization, and reduction or oxidation of disulfide bonds in client proteins and functions as a protein folding chaperone. Core component of the major histocompatibility complex class I (MHC I) peptide loading complex where it functions as an essential folding chaperone for TAPBP. Through TAPBP, assists the dynamic assembly of the MHC I complex with high affinity antigens in the endoplasmic reticulum. Therefore, plays a crucial role in the presentation of antigens to cytotoxic T cells in adaptive immunity.</text>
</comment>
<comment type="catalytic activity">
    <reaction evidence="4">
        <text>Catalyzes the rearrangement of -S-S- bonds in proteins.</text>
        <dbReference type="EC" id="5.3.4.1"/>
    </reaction>
</comment>
<comment type="subunit">
    <text evidence="3 4">Part of the major histocompatibility complex class I (MHC I) peptide loading complex composed of TAP1, TAP2, B2M, MHC heavy chain, TAPBP, PDIA3, and CALR. Interacts with ERP27 and CANX. Interacts with SERPINA2 and with SERPINA1 (By similarity). Interacts with ATP2A2 (By similarity).</text>
</comment>
<comment type="subcellular location">
    <subcellularLocation>
        <location evidence="4">Endoplasmic reticulum</location>
    </subcellularLocation>
    <subcellularLocation>
        <location evidence="2">Endoplasmic reticulum lumen</location>
    </subcellularLocation>
    <subcellularLocation>
        <location evidence="4">Melanosome</location>
    </subcellularLocation>
</comment>
<comment type="PTM">
    <text evidence="4">Within the major histocompatibility complex class I (MHC I) peptide loading complex forms reversible disulfide-linked heterodimers with TAPBP as part of its protein folding chaperone activity. This is essential to assist the dynamic assembly of the MHC I complex with high affinity antigens in the endoplasmic reticulum.</text>
</comment>
<comment type="PTM">
    <text evidence="3">Phosphorylated.</text>
</comment>
<comment type="similarity">
    <text evidence="7">Belongs to the protein disulfide isomerase family.</text>
</comment>
<comment type="caution">
    <text evidence="7">Was originally thought to be a phosphatidylinositol 4,5-bisphosphate phosphodiesterase type I (phospholipase C-alpha).</text>
</comment>
<sequence>MRLRRLALFPGLALLLAAARLAAASDVLELTDDNFESRITDTGSSGLMLVEFFAPWCGHCKKLAPEYEAAATRLKGIVPLAKVDCTANTNTCNKYGVSGYPTLKIFRDGEESGAYDGPRTADGIVSHLKKQAGPASVPLKSEEEFEKFISDKDASVVGFFKDLFSEAHSEFLKAASNLRDNYRFAHTNVESLVNKYDDDGEGITLFRPSHLTNKFEDKTVAYTEQKMTSGKIKRFIQENIFGICPHMTEDNKDLLQGKDLLIAYYDVDYEKNAKGSNYWRNRVMMVAKKFLDAGQKLHFAVASRKTFSHELSDFGLESTTGEIPVVAVRTAKGEKFVMQEEFSRDGKALERFLEDYFDGNLKRYLKSEPIPESNDGPVKVVVAENFDEIVNNENKDVLIEFYAPWCGHCKNLEPKYKELGEKLRKDPNIVIAKMDATANDVPSPYEVRGFPTIYFSPANKKQNPKKYEGGRELSDFISYLKREATNPPVIQEEKPKKKKKAQEDL</sequence>
<dbReference type="EC" id="5.3.4.1" evidence="4"/>
<dbReference type="EMBL" id="D16235">
    <property type="protein sequence ID" value="BAA03760.1"/>
    <property type="molecule type" value="mRNA"/>
</dbReference>
<dbReference type="PIR" id="JC2385">
    <property type="entry name" value="JC2385"/>
</dbReference>
<dbReference type="SMR" id="P38657"/>
<dbReference type="FunCoup" id="P38657">
    <property type="interactions" value="2366"/>
</dbReference>
<dbReference type="IntAct" id="P38657">
    <property type="interactions" value="1"/>
</dbReference>
<dbReference type="STRING" id="9913.ENSBTAP00000022854"/>
<dbReference type="PaxDb" id="9913-ENSBTAP00000022854"/>
<dbReference type="PeptideAtlas" id="P38657"/>
<dbReference type="eggNOG" id="KOG0190">
    <property type="taxonomic scope" value="Eukaryota"/>
</dbReference>
<dbReference type="InParanoid" id="P38657"/>
<dbReference type="OrthoDB" id="427280at2759"/>
<dbReference type="Proteomes" id="UP000009136">
    <property type="component" value="Unplaced"/>
</dbReference>
<dbReference type="GO" id="GO:0009986">
    <property type="term" value="C:cell surface"/>
    <property type="evidence" value="ECO:0000318"/>
    <property type="project" value="GO_Central"/>
</dbReference>
<dbReference type="GO" id="GO:0005783">
    <property type="term" value="C:endoplasmic reticulum"/>
    <property type="evidence" value="ECO:0000250"/>
    <property type="project" value="UniProtKB"/>
</dbReference>
<dbReference type="GO" id="GO:0005788">
    <property type="term" value="C:endoplasmic reticulum lumen"/>
    <property type="evidence" value="ECO:0007669"/>
    <property type="project" value="UniProtKB-SubCell"/>
</dbReference>
<dbReference type="GO" id="GO:0042470">
    <property type="term" value="C:melanosome"/>
    <property type="evidence" value="ECO:0007669"/>
    <property type="project" value="UniProtKB-SubCell"/>
</dbReference>
<dbReference type="GO" id="GO:0003756">
    <property type="term" value="F:protein disulfide isomerase activity"/>
    <property type="evidence" value="ECO:0000318"/>
    <property type="project" value="GO_Central"/>
</dbReference>
<dbReference type="GO" id="GO:0002250">
    <property type="term" value="P:adaptive immune response"/>
    <property type="evidence" value="ECO:0007669"/>
    <property type="project" value="UniProtKB-KW"/>
</dbReference>
<dbReference type="GO" id="GO:0043065">
    <property type="term" value="P:positive regulation of apoptotic process"/>
    <property type="evidence" value="ECO:0000250"/>
    <property type="project" value="AgBase"/>
</dbReference>
<dbReference type="GO" id="GO:0006457">
    <property type="term" value="P:protein folding"/>
    <property type="evidence" value="ECO:0000318"/>
    <property type="project" value="GO_Central"/>
</dbReference>
<dbReference type="GO" id="GO:0034976">
    <property type="term" value="P:response to endoplasmic reticulum stress"/>
    <property type="evidence" value="ECO:0000318"/>
    <property type="project" value="GO_Central"/>
</dbReference>
<dbReference type="CDD" id="cd02995">
    <property type="entry name" value="PDI_a_PDI_a'_C"/>
    <property type="match status" value="1"/>
</dbReference>
<dbReference type="CDD" id="cd03073">
    <property type="entry name" value="PDI_b'_ERp72_ERp57"/>
    <property type="match status" value="1"/>
</dbReference>
<dbReference type="CDD" id="cd03069">
    <property type="entry name" value="PDI_b_ERp57"/>
    <property type="match status" value="1"/>
</dbReference>
<dbReference type="FunFam" id="3.40.30.10:FF:000045">
    <property type="entry name" value="Disulfide-isomerase A3"/>
    <property type="match status" value="1"/>
</dbReference>
<dbReference type="FunFam" id="3.40.30.10:FF:000054">
    <property type="entry name" value="Disulfide-isomerase A3"/>
    <property type="match status" value="1"/>
</dbReference>
<dbReference type="FunFam" id="3.40.30.10:FF:000077">
    <property type="entry name" value="Protein disulfide-isomerase"/>
    <property type="match status" value="1"/>
</dbReference>
<dbReference type="FunFam" id="3.40.30.10:FF:000017">
    <property type="entry name" value="Protein disulfide-isomerase A4"/>
    <property type="match status" value="1"/>
</dbReference>
<dbReference type="Gene3D" id="3.40.30.10">
    <property type="entry name" value="Glutaredoxin"/>
    <property type="match status" value="4"/>
</dbReference>
<dbReference type="InterPro" id="IPR005788">
    <property type="entry name" value="PDI_thioredoxin-like_dom"/>
</dbReference>
<dbReference type="InterPro" id="IPR041868">
    <property type="entry name" value="PDIA3_PDI_b"/>
</dbReference>
<dbReference type="InterPro" id="IPR005792">
    <property type="entry name" value="Prot_disulphide_isomerase"/>
</dbReference>
<dbReference type="InterPro" id="IPR036249">
    <property type="entry name" value="Thioredoxin-like_sf"/>
</dbReference>
<dbReference type="InterPro" id="IPR017937">
    <property type="entry name" value="Thioredoxin_CS"/>
</dbReference>
<dbReference type="InterPro" id="IPR013766">
    <property type="entry name" value="Thioredoxin_domain"/>
</dbReference>
<dbReference type="NCBIfam" id="TIGR01130">
    <property type="entry name" value="ER_PDI_fam"/>
    <property type="match status" value="1"/>
</dbReference>
<dbReference type="NCBIfam" id="TIGR01126">
    <property type="entry name" value="pdi_dom"/>
    <property type="match status" value="2"/>
</dbReference>
<dbReference type="PANTHER" id="PTHR18929">
    <property type="entry name" value="PROTEIN DISULFIDE ISOMERASE"/>
    <property type="match status" value="1"/>
</dbReference>
<dbReference type="PANTHER" id="PTHR18929:SF132">
    <property type="entry name" value="PROTEIN DISULFIDE-ISOMERASE A3"/>
    <property type="match status" value="1"/>
</dbReference>
<dbReference type="Pfam" id="PF00085">
    <property type="entry name" value="Thioredoxin"/>
    <property type="match status" value="2"/>
</dbReference>
<dbReference type="Pfam" id="PF13848">
    <property type="entry name" value="Thioredoxin_6"/>
    <property type="match status" value="1"/>
</dbReference>
<dbReference type="PRINTS" id="PR00421">
    <property type="entry name" value="THIOREDOXIN"/>
</dbReference>
<dbReference type="SUPFAM" id="SSF52833">
    <property type="entry name" value="Thioredoxin-like"/>
    <property type="match status" value="4"/>
</dbReference>
<dbReference type="PROSITE" id="PS00194">
    <property type="entry name" value="THIOREDOXIN_1"/>
    <property type="match status" value="2"/>
</dbReference>
<dbReference type="PROSITE" id="PS51352">
    <property type="entry name" value="THIOREDOXIN_2"/>
    <property type="match status" value="2"/>
</dbReference>